<reference key="1">
    <citation type="journal article" date="1995" name="Curr. Genet.">
        <title>Primary structure and expression pattern of the 33-kDa chitinase gene from the mycoparasitic fungus Trichoderma harzianum.</title>
        <authorList>
            <person name="Limon M.C."/>
            <person name="Lora J.M."/>
            <person name="Garcia I."/>
            <person name="de la Cruz J."/>
            <person name="Llobell A."/>
            <person name="Benitez T."/>
            <person name="Pintor-Toro J.A."/>
        </authorList>
    </citation>
    <scope>NUCLEOTIDE SEQUENCE [MRNA]</scope>
    <scope>INDUCTION</scope>
    <source>
        <strain>2413</strain>
    </source>
</reference>
<reference key="2">
    <citation type="journal article" date="1992" name="Eur. J. Biochem.">
        <title>Isolation and characterization of three chitinases from Trichoderma harzianum.</title>
        <authorList>
            <person name="de la Cruz J."/>
            <person name="Hidalgo-Gallego A."/>
            <person name="Lora J.M."/>
            <person name="Benitez T."/>
            <person name="Pintor-Toro J.A."/>
            <person name="Llobell A."/>
        </authorList>
    </citation>
    <scope>INDUCTION</scope>
    <scope>SUBCELLULAR LOCATION</scope>
    <scope>SUBUNIT</scope>
    <scope>FUNCTION</scope>
    <scope>CATALYTIC ACTIVITY</scope>
    <scope>BIOPHYSICOCHEMICAL PROPERTIES</scope>
</reference>
<sequence>MPSLTALASLLALVPSALAGWNVNSKQNIAVYWGQNSANSQSTQQRLSFYCNDANINVIDIAFLNGITPPMTNFANAGDRCTPFSDNPWLLQCPEIEADIKTCQANGKTILLSLGGDSYTQGGWSSTGAAQSAADQVWAMFGPVQSGSSVHRPFGSAVVDGFDFDFEATTNNLAAFGAQLKSRTNAAGGKKYYFSAAPQCFFPDAAVGALINAVPMDWIQIQFYNNPCGVSGFTPGTSTQNNYNYQTWENWAKTSPNPNVKLLVGIPAGPGAGRGYVSGSQLTSVFQYSKGFSTFAGAMMWDMSQLYQNTGFETQVVNALR</sequence>
<evidence type="ECO:0000255" key="1"/>
<evidence type="ECO:0000255" key="2">
    <source>
        <dbReference type="PROSITE-ProRule" id="PRU01258"/>
    </source>
</evidence>
<evidence type="ECO:0000269" key="3">
    <source>
    </source>
</evidence>
<evidence type="ECO:0000269" key="4">
    <source>
    </source>
</evidence>
<evidence type="ECO:0000305" key="5"/>
<evidence type="ECO:0007829" key="6">
    <source>
        <dbReference type="PDB" id="7ZYA"/>
    </source>
</evidence>
<keyword id="KW-0002">3D-structure</keyword>
<keyword id="KW-0119">Carbohydrate metabolism</keyword>
<keyword id="KW-0146">Chitin degradation</keyword>
<keyword id="KW-0147">Chitin-binding</keyword>
<keyword id="KW-0326">Glycosidase</keyword>
<keyword id="KW-0378">Hydrolase</keyword>
<keyword id="KW-0624">Polysaccharide degradation</keyword>
<keyword id="KW-0964">Secreted</keyword>
<keyword id="KW-0732">Signal</keyword>
<keyword id="KW-0843">Virulence</keyword>
<protein>
    <recommendedName>
        <fullName>Endochitinase 33</fullName>
        <ecNumber>3.2.1.14</ecNumber>
    </recommendedName>
    <alternativeName>
        <fullName>33 kDa endochitinase</fullName>
    </alternativeName>
    <alternativeName>
        <fullName>Chitinase 33</fullName>
    </alternativeName>
</protein>
<dbReference type="EC" id="3.2.1.14"/>
<dbReference type="EMBL" id="X80006">
    <property type="protein sequence ID" value="CAA56315.1"/>
    <property type="molecule type" value="mRNA"/>
</dbReference>
<dbReference type="PIR" id="S60371">
    <property type="entry name" value="S60371"/>
</dbReference>
<dbReference type="PDB" id="7ZY9">
    <property type="method" value="X-ray"/>
    <property type="resolution" value="1.60 A"/>
    <property type="chains" value="A=19-321"/>
</dbReference>
<dbReference type="PDB" id="7ZYA">
    <property type="method" value="X-ray"/>
    <property type="resolution" value="1.12 A"/>
    <property type="chains" value="A=19-321"/>
</dbReference>
<dbReference type="PDBsum" id="7ZY9"/>
<dbReference type="PDBsum" id="7ZYA"/>
<dbReference type="SMR" id="Q12713"/>
<dbReference type="CAZy" id="GH18">
    <property type="family name" value="Glycoside Hydrolase Family 18"/>
</dbReference>
<dbReference type="BRENDA" id="3.2.1.14">
    <property type="organism ID" value="6445"/>
</dbReference>
<dbReference type="SABIO-RK" id="Q12713"/>
<dbReference type="GO" id="GO:0005576">
    <property type="term" value="C:extracellular region"/>
    <property type="evidence" value="ECO:0007669"/>
    <property type="project" value="UniProtKB-SubCell"/>
</dbReference>
<dbReference type="GO" id="GO:0008061">
    <property type="term" value="F:chitin binding"/>
    <property type="evidence" value="ECO:0007669"/>
    <property type="project" value="UniProtKB-KW"/>
</dbReference>
<dbReference type="GO" id="GO:0008843">
    <property type="term" value="F:endochitinase activity"/>
    <property type="evidence" value="ECO:0007669"/>
    <property type="project" value="UniProtKB-EC"/>
</dbReference>
<dbReference type="GO" id="GO:0006032">
    <property type="term" value="P:chitin catabolic process"/>
    <property type="evidence" value="ECO:0007669"/>
    <property type="project" value="UniProtKB-KW"/>
</dbReference>
<dbReference type="GO" id="GO:0000272">
    <property type="term" value="P:polysaccharide catabolic process"/>
    <property type="evidence" value="ECO:0007669"/>
    <property type="project" value="UniProtKB-KW"/>
</dbReference>
<dbReference type="CDD" id="cd02877">
    <property type="entry name" value="GH18_hevamine_XipI_class_III"/>
    <property type="match status" value="1"/>
</dbReference>
<dbReference type="Gene3D" id="3.20.20.80">
    <property type="entry name" value="Glycosidases"/>
    <property type="match status" value="1"/>
</dbReference>
<dbReference type="InterPro" id="IPR045321">
    <property type="entry name" value="Cts1-like"/>
</dbReference>
<dbReference type="InterPro" id="IPR001223">
    <property type="entry name" value="Glyco_hydro18_cat"/>
</dbReference>
<dbReference type="InterPro" id="IPR001579">
    <property type="entry name" value="Glyco_hydro_18_chit_AS"/>
</dbReference>
<dbReference type="InterPro" id="IPR017853">
    <property type="entry name" value="Glycoside_hydrolase_SF"/>
</dbReference>
<dbReference type="InterPro" id="IPR050542">
    <property type="entry name" value="Glycosyl_Hydrlase18_Chitinase"/>
</dbReference>
<dbReference type="PANTHER" id="PTHR45708">
    <property type="entry name" value="ENDOCHITINASE"/>
    <property type="match status" value="1"/>
</dbReference>
<dbReference type="PANTHER" id="PTHR45708:SF49">
    <property type="entry name" value="ENDOCHITINASE"/>
    <property type="match status" value="1"/>
</dbReference>
<dbReference type="Pfam" id="PF00704">
    <property type="entry name" value="Glyco_hydro_18"/>
    <property type="match status" value="1"/>
</dbReference>
<dbReference type="SUPFAM" id="SSF51445">
    <property type="entry name" value="(Trans)glycosidases"/>
    <property type="match status" value="1"/>
</dbReference>
<dbReference type="PROSITE" id="PS01095">
    <property type="entry name" value="GH18_1"/>
    <property type="match status" value="1"/>
</dbReference>
<dbReference type="PROSITE" id="PS51910">
    <property type="entry name" value="GH18_2"/>
    <property type="match status" value="1"/>
</dbReference>
<gene>
    <name type="primary">chit33</name>
</gene>
<proteinExistence type="evidence at protein level"/>
<comment type="function">
    <text evidence="3">Secreted chitinase involved in the degradation of chitin, a component of the cell walls of fungi and exoskeletal elements of some animals (including worms and arthropods). Plays a morphogenetic role during apical growth, cell division and differentiation (cell wall morphogenesis). May be involved in the degradation and further assimilation of phytopathogenic fungi, namely mycoparasitism, the major mechanism accounting for the antagonistic activity against phytopathogenic fungi displayed by Trichoderma.</text>
</comment>
<comment type="catalytic activity">
    <reaction evidence="3">
        <text>Random endo-hydrolysis of N-acetyl-beta-D-glucosaminide (1-&gt;4)-beta-linkages in chitin and chitodextrins.</text>
        <dbReference type="EC" id="3.2.1.14"/>
    </reaction>
</comment>
<comment type="biophysicochemical properties">
    <kinetics>
        <KM evidence="3">1 mg/ml for colloidal chitin</KM>
        <KM evidence="3">0.85 mM for p-nitrophenyl-N-N'-diacetylchitobiose</KM>
    </kinetics>
    <temperatureDependence>
        <text evidence="3">Optimum temperature is 40-45 degrees Celsius.</text>
    </temperatureDependence>
</comment>
<comment type="subunit">
    <text evidence="3">Monomer.</text>
</comment>
<comment type="subcellular location">
    <subcellularLocation>
        <location evidence="3">Secreted</location>
    </subcellularLocation>
</comment>
<comment type="induction">
    <text evidence="3 4">Specifically induced by chitin and strongly repressed by glucose.</text>
</comment>
<comment type="biotechnology">
    <text>The antagonistic activity of Trichoderma harzianum is used for the control of several soil borne plant pathogenic fungi.</text>
</comment>
<comment type="similarity">
    <text evidence="5">Belongs to the glycosyl hydrolase 18 family. Chitinase class III subfamily.</text>
</comment>
<accession>Q12713</accession>
<feature type="signal peptide" evidence="1">
    <location>
        <begin position="1"/>
        <end position="19"/>
    </location>
</feature>
<feature type="chain" id="PRO_0000429895" description="Endochitinase 33">
    <location>
        <begin position="20"/>
        <end position="321"/>
    </location>
</feature>
<feature type="domain" description="GH18" evidence="2">
    <location>
        <begin position="27"/>
        <end position="321"/>
    </location>
</feature>
<feature type="active site" description="Proton donor" evidence="2">
    <location>
        <position position="167"/>
    </location>
</feature>
<feature type="strand" evidence="6">
    <location>
        <begin position="28"/>
        <end position="35"/>
    </location>
</feature>
<feature type="helix" evidence="6">
    <location>
        <begin position="47"/>
        <end position="50"/>
    </location>
</feature>
<feature type="strand" evidence="6">
    <location>
        <begin position="58"/>
        <end position="66"/>
    </location>
</feature>
<feature type="turn" evidence="6">
    <location>
        <begin position="67"/>
        <end position="70"/>
    </location>
</feature>
<feature type="helix" evidence="6">
    <location>
        <begin position="75"/>
        <end position="80"/>
    </location>
</feature>
<feature type="strand" evidence="6">
    <location>
        <begin position="82"/>
        <end position="84"/>
    </location>
</feature>
<feature type="strand" evidence="6">
    <location>
        <begin position="87"/>
        <end position="92"/>
    </location>
</feature>
<feature type="helix" evidence="6">
    <location>
        <begin position="94"/>
        <end position="105"/>
    </location>
</feature>
<feature type="strand" evidence="6">
    <location>
        <begin position="109"/>
        <end position="115"/>
    </location>
</feature>
<feature type="helix" evidence="6">
    <location>
        <begin position="127"/>
        <end position="141"/>
    </location>
</feature>
<feature type="turn" evidence="6">
    <location>
        <begin position="153"/>
        <end position="156"/>
    </location>
</feature>
<feature type="strand" evidence="6">
    <location>
        <begin position="160"/>
        <end position="165"/>
    </location>
</feature>
<feature type="helix" evidence="6">
    <location>
        <begin position="173"/>
        <end position="186"/>
    </location>
</feature>
<feature type="strand" evidence="6">
    <location>
        <begin position="193"/>
        <end position="196"/>
    </location>
</feature>
<feature type="strand" evidence="6">
    <location>
        <begin position="199"/>
        <end position="203"/>
    </location>
</feature>
<feature type="turn" evidence="6">
    <location>
        <begin position="205"/>
        <end position="207"/>
    </location>
</feature>
<feature type="helix" evidence="6">
    <location>
        <begin position="208"/>
        <end position="213"/>
    </location>
</feature>
<feature type="strand" evidence="6">
    <location>
        <begin position="217"/>
        <end position="222"/>
    </location>
</feature>
<feature type="strand" evidence="6">
    <location>
        <begin position="224"/>
        <end position="226"/>
    </location>
</feature>
<feature type="helix" evidence="6">
    <location>
        <begin position="230"/>
        <end position="232"/>
    </location>
</feature>
<feature type="helix" evidence="6">
    <location>
        <begin position="245"/>
        <end position="252"/>
    </location>
</feature>
<feature type="strand" evidence="6">
    <location>
        <begin position="255"/>
        <end position="257"/>
    </location>
</feature>
<feature type="strand" evidence="6">
    <location>
        <begin position="261"/>
        <end position="269"/>
    </location>
</feature>
<feature type="helix" evidence="6">
    <location>
        <begin position="279"/>
        <end position="289"/>
    </location>
</feature>
<feature type="strand" evidence="6">
    <location>
        <begin position="295"/>
        <end position="301"/>
    </location>
</feature>
<feature type="helix" evidence="6">
    <location>
        <begin position="303"/>
        <end position="308"/>
    </location>
</feature>
<feature type="helix" evidence="6">
    <location>
        <begin position="312"/>
        <end position="320"/>
    </location>
</feature>
<organism>
    <name type="scientific">Trichoderma harzianum</name>
    <name type="common">Hypocrea lixii</name>
    <dbReference type="NCBI Taxonomy" id="5544"/>
    <lineage>
        <taxon>Eukaryota</taxon>
        <taxon>Fungi</taxon>
        <taxon>Dikarya</taxon>
        <taxon>Ascomycota</taxon>
        <taxon>Pezizomycotina</taxon>
        <taxon>Sordariomycetes</taxon>
        <taxon>Hypocreomycetidae</taxon>
        <taxon>Hypocreales</taxon>
        <taxon>Hypocreaceae</taxon>
        <taxon>Trichoderma</taxon>
    </lineage>
</organism>
<name>CHI33_TRIHA</name>